<gene>
    <name evidence="1" type="primary">atpE</name>
    <name type="ordered locus">PM1489</name>
</gene>
<proteinExistence type="inferred from homology"/>
<comment type="function">
    <text evidence="1">F(1)F(0) ATP synthase produces ATP from ADP in the presence of a proton or sodium gradient. F-type ATPases consist of two structural domains, F(1) containing the extramembraneous catalytic core and F(0) containing the membrane proton channel, linked together by a central stalk and a peripheral stalk. During catalysis, ATP synthesis in the catalytic domain of F(1) is coupled via a rotary mechanism of the central stalk subunits to proton translocation.</text>
</comment>
<comment type="function">
    <text evidence="1">Key component of the F(0) channel; it plays a direct role in translocation across the membrane. A homomeric c-ring of between 10-14 subunits forms the central stalk rotor element with the F(1) delta and epsilon subunits.</text>
</comment>
<comment type="subunit">
    <text evidence="1">F-type ATPases have 2 components, F(1) - the catalytic core - and F(0) - the membrane proton channel. F(1) has five subunits: alpha(3), beta(3), gamma(1), delta(1), epsilon(1). F(0) has three main subunits: a(1), b(2) and c(10-14). The alpha and beta chains form an alternating ring which encloses part of the gamma chain. F(1) is attached to F(0) by a central stalk formed by the gamma and epsilon chains, while a peripheral stalk is formed by the delta and b chains.</text>
</comment>
<comment type="subcellular location">
    <subcellularLocation>
        <location evidence="1">Cell inner membrane</location>
        <topology evidence="1">Multi-pass membrane protein</topology>
    </subcellularLocation>
</comment>
<comment type="similarity">
    <text evidence="1">Belongs to the ATPase C chain family.</text>
</comment>
<keyword id="KW-0066">ATP synthesis</keyword>
<keyword id="KW-0997">Cell inner membrane</keyword>
<keyword id="KW-1003">Cell membrane</keyword>
<keyword id="KW-0138">CF(0)</keyword>
<keyword id="KW-0375">Hydrogen ion transport</keyword>
<keyword id="KW-0406">Ion transport</keyword>
<keyword id="KW-0446">Lipid-binding</keyword>
<keyword id="KW-0472">Membrane</keyword>
<keyword id="KW-1185">Reference proteome</keyword>
<keyword id="KW-0812">Transmembrane</keyword>
<keyword id="KW-1133">Transmembrane helix</keyword>
<keyword id="KW-0813">Transport</keyword>
<dbReference type="EMBL" id="AE004439">
    <property type="protein sequence ID" value="AAK03573.1"/>
    <property type="molecule type" value="Genomic_DNA"/>
</dbReference>
<dbReference type="RefSeq" id="WP_005718049.1">
    <property type="nucleotide sequence ID" value="NC_002663.1"/>
</dbReference>
<dbReference type="SMR" id="Q9CKW5"/>
<dbReference type="STRING" id="272843.PM1489"/>
<dbReference type="EnsemblBacteria" id="AAK03573">
    <property type="protein sequence ID" value="AAK03573"/>
    <property type="gene ID" value="PM1489"/>
</dbReference>
<dbReference type="GeneID" id="77206951"/>
<dbReference type="KEGG" id="pmu:PM1489"/>
<dbReference type="HOGENOM" id="CLU_148047_1_0_6"/>
<dbReference type="OrthoDB" id="9811659at2"/>
<dbReference type="Proteomes" id="UP000000809">
    <property type="component" value="Chromosome"/>
</dbReference>
<dbReference type="GO" id="GO:0005886">
    <property type="term" value="C:plasma membrane"/>
    <property type="evidence" value="ECO:0007669"/>
    <property type="project" value="UniProtKB-SubCell"/>
</dbReference>
<dbReference type="GO" id="GO:0045259">
    <property type="term" value="C:proton-transporting ATP synthase complex"/>
    <property type="evidence" value="ECO:0007669"/>
    <property type="project" value="UniProtKB-KW"/>
</dbReference>
<dbReference type="GO" id="GO:0033177">
    <property type="term" value="C:proton-transporting two-sector ATPase complex, proton-transporting domain"/>
    <property type="evidence" value="ECO:0007669"/>
    <property type="project" value="InterPro"/>
</dbReference>
<dbReference type="GO" id="GO:0008289">
    <property type="term" value="F:lipid binding"/>
    <property type="evidence" value="ECO:0007669"/>
    <property type="project" value="UniProtKB-KW"/>
</dbReference>
<dbReference type="GO" id="GO:0046933">
    <property type="term" value="F:proton-transporting ATP synthase activity, rotational mechanism"/>
    <property type="evidence" value="ECO:0007669"/>
    <property type="project" value="UniProtKB-UniRule"/>
</dbReference>
<dbReference type="CDD" id="cd18185">
    <property type="entry name" value="ATP-synt_Fo_c_ATPE"/>
    <property type="match status" value="1"/>
</dbReference>
<dbReference type="FunFam" id="1.20.20.10:FF:000002">
    <property type="entry name" value="ATP synthase subunit c"/>
    <property type="match status" value="1"/>
</dbReference>
<dbReference type="Gene3D" id="1.20.20.10">
    <property type="entry name" value="F1F0 ATP synthase subunit C"/>
    <property type="match status" value="1"/>
</dbReference>
<dbReference type="HAMAP" id="MF_01396">
    <property type="entry name" value="ATP_synth_c_bact"/>
    <property type="match status" value="1"/>
</dbReference>
<dbReference type="InterPro" id="IPR005953">
    <property type="entry name" value="ATP_synth_csu_bac/chlpt"/>
</dbReference>
<dbReference type="InterPro" id="IPR000454">
    <property type="entry name" value="ATP_synth_F0_csu"/>
</dbReference>
<dbReference type="InterPro" id="IPR020537">
    <property type="entry name" value="ATP_synth_F0_csu_DDCD_BS"/>
</dbReference>
<dbReference type="InterPro" id="IPR038662">
    <property type="entry name" value="ATP_synth_F0_csu_sf"/>
</dbReference>
<dbReference type="InterPro" id="IPR002379">
    <property type="entry name" value="ATPase_proteolipid_c-like_dom"/>
</dbReference>
<dbReference type="InterPro" id="IPR035921">
    <property type="entry name" value="F/V-ATP_Csub_sf"/>
</dbReference>
<dbReference type="NCBIfam" id="TIGR01260">
    <property type="entry name" value="ATP_synt_c"/>
    <property type="match status" value="1"/>
</dbReference>
<dbReference type="NCBIfam" id="NF005363">
    <property type="entry name" value="PRK06876.1"/>
    <property type="match status" value="1"/>
</dbReference>
<dbReference type="Pfam" id="PF00137">
    <property type="entry name" value="ATP-synt_C"/>
    <property type="match status" value="1"/>
</dbReference>
<dbReference type="PRINTS" id="PR00124">
    <property type="entry name" value="ATPASEC"/>
</dbReference>
<dbReference type="SUPFAM" id="SSF81333">
    <property type="entry name" value="F1F0 ATP synthase subunit C"/>
    <property type="match status" value="1"/>
</dbReference>
<dbReference type="PROSITE" id="PS00605">
    <property type="entry name" value="ATPASE_C"/>
    <property type="match status" value="1"/>
</dbReference>
<sequence length="84" mass="8722">METVITTTIIASAILLAVAALGTALGFAILGGKFLESSARQPELASSLQIKMFIVAGLLDAISMIAVGIALLFIFANPFIDLLK</sequence>
<protein>
    <recommendedName>
        <fullName evidence="1">ATP synthase subunit c</fullName>
    </recommendedName>
    <alternativeName>
        <fullName evidence="1">ATP synthase F(0) sector subunit c</fullName>
    </alternativeName>
    <alternativeName>
        <fullName evidence="1">F-type ATPase subunit c</fullName>
        <shortName evidence="1">F-ATPase subunit c</shortName>
    </alternativeName>
    <alternativeName>
        <fullName evidence="1">Lipid-binding protein</fullName>
    </alternativeName>
</protein>
<evidence type="ECO:0000255" key="1">
    <source>
        <dbReference type="HAMAP-Rule" id="MF_01396"/>
    </source>
</evidence>
<name>ATPL_PASMU</name>
<organism>
    <name type="scientific">Pasteurella multocida (strain Pm70)</name>
    <dbReference type="NCBI Taxonomy" id="272843"/>
    <lineage>
        <taxon>Bacteria</taxon>
        <taxon>Pseudomonadati</taxon>
        <taxon>Pseudomonadota</taxon>
        <taxon>Gammaproteobacteria</taxon>
        <taxon>Pasteurellales</taxon>
        <taxon>Pasteurellaceae</taxon>
        <taxon>Pasteurella</taxon>
    </lineage>
</organism>
<reference key="1">
    <citation type="journal article" date="2001" name="Proc. Natl. Acad. Sci. U.S.A.">
        <title>Complete genomic sequence of Pasteurella multocida Pm70.</title>
        <authorList>
            <person name="May B.J."/>
            <person name="Zhang Q."/>
            <person name="Li L.L."/>
            <person name="Paustian M.L."/>
            <person name="Whittam T.S."/>
            <person name="Kapur V."/>
        </authorList>
    </citation>
    <scope>NUCLEOTIDE SEQUENCE [LARGE SCALE GENOMIC DNA]</scope>
    <source>
        <strain>Pm70</strain>
    </source>
</reference>
<accession>Q9CKW5</accession>
<feature type="chain" id="PRO_1000184430" description="ATP synthase subunit c">
    <location>
        <begin position="1"/>
        <end position="84"/>
    </location>
</feature>
<feature type="transmembrane region" description="Helical" evidence="1">
    <location>
        <begin position="9"/>
        <end position="29"/>
    </location>
</feature>
<feature type="transmembrane region" description="Helical" evidence="1">
    <location>
        <begin position="54"/>
        <end position="74"/>
    </location>
</feature>
<feature type="site" description="Reversibly protonated during proton transport" evidence="1">
    <location>
        <position position="60"/>
    </location>
</feature>